<comment type="function">
    <text evidence="1">Methyltransferase required for the conversion of demethylmenaquinol (DMKH2) to menaquinol (MKH2) and the conversion of 2-polyprenyl-6-methoxy-1,4-benzoquinol (DDMQH2) to 2-polyprenyl-3-methyl-6-methoxy-1,4-benzoquinol (DMQH2).</text>
</comment>
<comment type="catalytic activity">
    <reaction evidence="1">
        <text>a 2-demethylmenaquinol + S-adenosyl-L-methionine = a menaquinol + S-adenosyl-L-homocysteine + H(+)</text>
        <dbReference type="Rhea" id="RHEA:42640"/>
        <dbReference type="Rhea" id="RHEA-COMP:9539"/>
        <dbReference type="Rhea" id="RHEA-COMP:9563"/>
        <dbReference type="ChEBI" id="CHEBI:15378"/>
        <dbReference type="ChEBI" id="CHEBI:18151"/>
        <dbReference type="ChEBI" id="CHEBI:55437"/>
        <dbReference type="ChEBI" id="CHEBI:57856"/>
        <dbReference type="ChEBI" id="CHEBI:59789"/>
        <dbReference type="EC" id="2.1.1.163"/>
    </reaction>
</comment>
<comment type="catalytic activity">
    <reaction evidence="1">
        <text>a 2-methoxy-6-(all-trans-polyprenyl)benzene-1,4-diol + S-adenosyl-L-methionine = a 5-methoxy-2-methyl-3-(all-trans-polyprenyl)benzene-1,4-diol + S-adenosyl-L-homocysteine + H(+)</text>
        <dbReference type="Rhea" id="RHEA:28286"/>
        <dbReference type="Rhea" id="RHEA-COMP:10858"/>
        <dbReference type="Rhea" id="RHEA-COMP:10859"/>
        <dbReference type="ChEBI" id="CHEBI:15378"/>
        <dbReference type="ChEBI" id="CHEBI:57856"/>
        <dbReference type="ChEBI" id="CHEBI:59789"/>
        <dbReference type="ChEBI" id="CHEBI:84166"/>
        <dbReference type="ChEBI" id="CHEBI:84167"/>
        <dbReference type="EC" id="2.1.1.201"/>
    </reaction>
</comment>
<comment type="pathway">
    <text evidence="1">Quinol/quinone metabolism; menaquinone biosynthesis; menaquinol from 1,4-dihydroxy-2-naphthoate: step 2/2.</text>
</comment>
<comment type="pathway">
    <text evidence="1">Cofactor biosynthesis; ubiquinone biosynthesis.</text>
</comment>
<comment type="similarity">
    <text evidence="1">Belongs to the class I-like SAM-binding methyltransferase superfamily. MenG/UbiE family.</text>
</comment>
<organism>
    <name type="scientific">Psychromonas ingrahamii (strain DSM 17664 / CCUG 51855 / 37)</name>
    <dbReference type="NCBI Taxonomy" id="357804"/>
    <lineage>
        <taxon>Bacteria</taxon>
        <taxon>Pseudomonadati</taxon>
        <taxon>Pseudomonadota</taxon>
        <taxon>Gammaproteobacteria</taxon>
        <taxon>Alteromonadales</taxon>
        <taxon>Psychromonadaceae</taxon>
        <taxon>Psychromonas</taxon>
    </lineage>
</organism>
<feature type="chain" id="PRO_1000070200" description="Ubiquinone/menaquinone biosynthesis C-methyltransferase UbiE">
    <location>
        <begin position="1"/>
        <end position="251"/>
    </location>
</feature>
<feature type="binding site" evidence="1">
    <location>
        <position position="74"/>
    </location>
    <ligand>
        <name>S-adenosyl-L-methionine</name>
        <dbReference type="ChEBI" id="CHEBI:59789"/>
    </ligand>
</feature>
<feature type="binding site" evidence="1">
    <location>
        <position position="95"/>
    </location>
    <ligand>
        <name>S-adenosyl-L-methionine</name>
        <dbReference type="ChEBI" id="CHEBI:59789"/>
    </ligand>
</feature>
<feature type="binding site" evidence="1">
    <location>
        <begin position="123"/>
        <end position="124"/>
    </location>
    <ligand>
        <name>S-adenosyl-L-methionine</name>
        <dbReference type="ChEBI" id="CHEBI:59789"/>
    </ligand>
</feature>
<reference key="1">
    <citation type="journal article" date="2008" name="BMC Genomics">
        <title>Genomics of an extreme psychrophile, Psychromonas ingrahamii.</title>
        <authorList>
            <person name="Riley M."/>
            <person name="Staley J.T."/>
            <person name="Danchin A."/>
            <person name="Wang T.Z."/>
            <person name="Brettin T.S."/>
            <person name="Hauser L.J."/>
            <person name="Land M.L."/>
            <person name="Thompson L.S."/>
        </authorList>
    </citation>
    <scope>NUCLEOTIDE SEQUENCE [LARGE SCALE GENOMIC DNA]</scope>
    <source>
        <strain>DSM 17664 / CCUG 51855 / 37</strain>
    </source>
</reference>
<evidence type="ECO:0000255" key="1">
    <source>
        <dbReference type="HAMAP-Rule" id="MF_01813"/>
    </source>
</evidence>
<sequence length="251" mass="27955">MSNQAENTTHFGFKTVQEDTKADLVAGVFHSVAAKYDIMNDVLSMGVHRIWKRFTVDCSGIRKGQKVLDLAGGTGDLTAKFSRIVGQTGQVTLADINDSMLKVGRSKLRDLGIVGNVSYVQANAEELPFPDNHFDLITIAFGLRNVTDKDKALASMYRVLKPGGRLLVLEFSTPLYEPLSKFYDFYSFNVLPKLGKLIANDSESYQYLAESIRMHPGQEILKEMMNSANFEGCEYFNLSGGIVALHRGYKY</sequence>
<accession>A1SRS4</accession>
<keyword id="KW-0474">Menaquinone biosynthesis</keyword>
<keyword id="KW-0489">Methyltransferase</keyword>
<keyword id="KW-1185">Reference proteome</keyword>
<keyword id="KW-0949">S-adenosyl-L-methionine</keyword>
<keyword id="KW-0808">Transferase</keyword>
<keyword id="KW-0831">Ubiquinone biosynthesis</keyword>
<proteinExistence type="inferred from homology"/>
<protein>
    <recommendedName>
        <fullName evidence="1">Ubiquinone/menaquinone biosynthesis C-methyltransferase UbiE</fullName>
        <ecNumber evidence="1">2.1.1.163</ecNumber>
        <ecNumber evidence="1">2.1.1.201</ecNumber>
    </recommendedName>
    <alternativeName>
        <fullName evidence="1">2-methoxy-6-polyprenyl-1,4-benzoquinol methylase</fullName>
    </alternativeName>
    <alternativeName>
        <fullName evidence="1">Demethylmenaquinone methyltransferase</fullName>
    </alternativeName>
</protein>
<dbReference type="EC" id="2.1.1.163" evidence="1"/>
<dbReference type="EC" id="2.1.1.201" evidence="1"/>
<dbReference type="EMBL" id="CP000510">
    <property type="protein sequence ID" value="ABM02189.1"/>
    <property type="molecule type" value="Genomic_DNA"/>
</dbReference>
<dbReference type="RefSeq" id="WP_011768748.1">
    <property type="nucleotide sequence ID" value="NC_008709.1"/>
</dbReference>
<dbReference type="SMR" id="A1SRS4"/>
<dbReference type="STRING" id="357804.Ping_0323"/>
<dbReference type="KEGG" id="pin:Ping_0323"/>
<dbReference type="eggNOG" id="COG2226">
    <property type="taxonomic scope" value="Bacteria"/>
</dbReference>
<dbReference type="HOGENOM" id="CLU_037990_0_0_6"/>
<dbReference type="OrthoDB" id="9808140at2"/>
<dbReference type="UniPathway" id="UPA00079">
    <property type="reaction ID" value="UER00169"/>
</dbReference>
<dbReference type="UniPathway" id="UPA00232"/>
<dbReference type="Proteomes" id="UP000000639">
    <property type="component" value="Chromosome"/>
</dbReference>
<dbReference type="GO" id="GO:0008425">
    <property type="term" value="F:2-methoxy-6-polyprenyl-1,4-benzoquinol methyltransferase activity"/>
    <property type="evidence" value="ECO:0007669"/>
    <property type="project" value="UniProtKB-UniRule"/>
</dbReference>
<dbReference type="GO" id="GO:0043770">
    <property type="term" value="F:demethylmenaquinone methyltransferase activity"/>
    <property type="evidence" value="ECO:0007669"/>
    <property type="project" value="UniProtKB-UniRule"/>
</dbReference>
<dbReference type="GO" id="GO:0009060">
    <property type="term" value="P:aerobic respiration"/>
    <property type="evidence" value="ECO:0007669"/>
    <property type="project" value="UniProtKB-UniRule"/>
</dbReference>
<dbReference type="GO" id="GO:0009234">
    <property type="term" value="P:menaquinone biosynthetic process"/>
    <property type="evidence" value="ECO:0007669"/>
    <property type="project" value="UniProtKB-UniRule"/>
</dbReference>
<dbReference type="GO" id="GO:0032259">
    <property type="term" value="P:methylation"/>
    <property type="evidence" value="ECO:0007669"/>
    <property type="project" value="UniProtKB-KW"/>
</dbReference>
<dbReference type="CDD" id="cd02440">
    <property type="entry name" value="AdoMet_MTases"/>
    <property type="match status" value="1"/>
</dbReference>
<dbReference type="FunFam" id="3.40.50.150:FF:000014">
    <property type="entry name" value="Ubiquinone/menaquinone biosynthesis C-methyltransferase UbiE"/>
    <property type="match status" value="1"/>
</dbReference>
<dbReference type="Gene3D" id="3.40.50.150">
    <property type="entry name" value="Vaccinia Virus protein VP39"/>
    <property type="match status" value="1"/>
</dbReference>
<dbReference type="HAMAP" id="MF_01813">
    <property type="entry name" value="MenG_UbiE_methyltr"/>
    <property type="match status" value="1"/>
</dbReference>
<dbReference type="InterPro" id="IPR029063">
    <property type="entry name" value="SAM-dependent_MTases_sf"/>
</dbReference>
<dbReference type="InterPro" id="IPR004033">
    <property type="entry name" value="UbiE/COQ5_MeTrFase"/>
</dbReference>
<dbReference type="InterPro" id="IPR023576">
    <property type="entry name" value="UbiE/COQ5_MeTrFase_CS"/>
</dbReference>
<dbReference type="NCBIfam" id="TIGR01934">
    <property type="entry name" value="MenG_MenH_UbiE"/>
    <property type="match status" value="1"/>
</dbReference>
<dbReference type="NCBIfam" id="NF001240">
    <property type="entry name" value="PRK00216.1-1"/>
    <property type="match status" value="1"/>
</dbReference>
<dbReference type="NCBIfam" id="NF001242">
    <property type="entry name" value="PRK00216.1-3"/>
    <property type="match status" value="1"/>
</dbReference>
<dbReference type="NCBIfam" id="NF001244">
    <property type="entry name" value="PRK00216.1-5"/>
    <property type="match status" value="1"/>
</dbReference>
<dbReference type="PANTHER" id="PTHR43591:SF24">
    <property type="entry name" value="2-METHOXY-6-POLYPRENYL-1,4-BENZOQUINOL METHYLASE, MITOCHONDRIAL"/>
    <property type="match status" value="1"/>
</dbReference>
<dbReference type="PANTHER" id="PTHR43591">
    <property type="entry name" value="METHYLTRANSFERASE"/>
    <property type="match status" value="1"/>
</dbReference>
<dbReference type="Pfam" id="PF01209">
    <property type="entry name" value="Ubie_methyltran"/>
    <property type="match status" value="1"/>
</dbReference>
<dbReference type="SUPFAM" id="SSF53335">
    <property type="entry name" value="S-adenosyl-L-methionine-dependent methyltransferases"/>
    <property type="match status" value="1"/>
</dbReference>
<dbReference type="PROSITE" id="PS51608">
    <property type="entry name" value="SAM_MT_UBIE"/>
    <property type="match status" value="1"/>
</dbReference>
<dbReference type="PROSITE" id="PS01183">
    <property type="entry name" value="UBIE_1"/>
    <property type="match status" value="1"/>
</dbReference>
<dbReference type="PROSITE" id="PS01184">
    <property type="entry name" value="UBIE_2"/>
    <property type="match status" value="1"/>
</dbReference>
<name>UBIE_PSYIN</name>
<gene>
    <name evidence="1" type="primary">ubiE</name>
    <name type="ordered locus">Ping_0323</name>
</gene>